<comment type="function">
    <text evidence="1 2">Transcription factor which acts as a transcriptional repressor (By similarity). May also function as a transcriptional activator (By similarity). Binds to the palindromic T site 5'-TTCACACCTAGGTGTGAA-3' DNA sequence, or a half-site, which are present in the regulatory region of several genes (By similarity).</text>
</comment>
<comment type="subunit">
    <text evidence="1">Binds DNA as a monomer.</text>
</comment>
<comment type="subcellular location">
    <subcellularLocation>
        <location evidence="1">Nucleus</location>
    </subcellularLocation>
</comment>
<comment type="developmental stage">
    <text evidence="6 7">First detected in the ventral mesodermal cells just above the yolk plug at late gastrula. At the neurula stage, strongly expressed in the cement gland, dorsal root ganglia and otic vesicle region. At the tailbud stage, a strong expression is observed in the dorsal part of the optic cup and trigeminal ganglia, and it is also expressed in the branchial arches, heart anlage, nasal pit, proctodeum and the region around the pronephros.</text>
</comment>
<comment type="domain">
    <text evidence="1">Repression domain 1 (RD1) is involved in transcriptional repression.</text>
</comment>
<comment type="sequence caution" evidence="8">
    <conflict type="erroneous initiation">
        <sequence resource="EMBL-CDS" id="BAA82338"/>
    </conflict>
</comment>
<comment type="sequence caution" evidence="8">
    <conflict type="erroneous initiation">
        <sequence resource="EMBL-CDS" id="BAA93081"/>
    </conflict>
</comment>
<name>TBX2A_XENLA</name>
<protein>
    <recommendedName>
        <fullName>T-box transcription factor TBX2-A</fullName>
        <shortName>T-box protein 2-A</shortName>
    </recommendedName>
</protein>
<proteinExistence type="evidence at transcript level"/>
<organism>
    <name type="scientific">Xenopus laevis</name>
    <name type="common">African clawed frog</name>
    <dbReference type="NCBI Taxonomy" id="8355"/>
    <lineage>
        <taxon>Eukaryota</taxon>
        <taxon>Metazoa</taxon>
        <taxon>Chordata</taxon>
        <taxon>Craniata</taxon>
        <taxon>Vertebrata</taxon>
        <taxon>Euteleostomi</taxon>
        <taxon>Amphibia</taxon>
        <taxon>Batrachia</taxon>
        <taxon>Anura</taxon>
        <taxon>Pipoidea</taxon>
        <taxon>Pipidae</taxon>
        <taxon>Xenopodinae</taxon>
        <taxon>Xenopus</taxon>
        <taxon>Xenopus</taxon>
    </lineage>
</organism>
<sequence>MRDPAFPGAAMAYHPFHAPRAADFPMSAFLAAAQPSFFPALTLPPAALGKPLSDASLAGAAEAGLHLSALGHHHQAAHLRSLKSLEPEEEVEDDPKVNLEAKELWDQFHKIGTEMVITKSGRRMFPPFKVRVSGLDKKAKYILLMDIVAADDCRYKFHNSRWMVAGKADPEMPKRMYIHPDSPATGEQWMAKPVAFHKLKLTNNISDKHGFTILNSMHKYQPRFHIVRANDILKLPYSTFRTYVFPETDFIAVTAYQNDKITQLKIDNNPFAKGFRDTGNGRREKRKQLSLPSLRMYEEQCKADRDGAESDASSCDPAPGRDSLHSPLSAEPSPLRLHRNNREEKFGADSDQELDRREIRSARSHSPVGHRSPPSSPRLEDRGKDKSTPEKKSDSPESRKDGSDSLFSSIRSLEKDKAESRRKEDSKSDPECGSLSKETFAPLMVQTDSPPHLSASHLQSLALSGLHGQQFFNPLNAGQPLFIHPGQFTMGPGAFSAMGMGHLLASMTGAGALDNGSLSSVQGATGAANPFPFHFSQHMLASQGIPMPAFGGLFPYPYTYMAAAAAAASAMPATSAATTMPRNPFLSSTRPRLRFNPYQIPVGIPPSTNLLTTGLPGSLNPGSESSKPGSSRESSPIPDTPVPKRSHSNSLSPKASMKDSINELQNIQRLVSGLESQREISPGRETPK</sequence>
<gene>
    <name type="primary">tbx2-a</name>
</gene>
<reference key="1">
    <citation type="journal article" date="1999" name="Dev. Genes Evol.">
        <title>Expression of Xenopus T-box transcription factor, tbx2 in Xenopus embryo.</title>
        <authorList>
            <person name="Hayata T."/>
            <person name="Kuroda H."/>
            <person name="Eisaki A."/>
            <person name="Asashima M."/>
        </authorList>
    </citation>
    <scope>NUCLEOTIDE SEQUENCE [MRNA]</scope>
    <scope>DEVELOPMENTAL STAGE</scope>
</reference>
<reference key="2">
    <citation type="journal article" date="2000" name="Mech. Dev.">
        <title>Conserved and divergent expression of T-box genes Tbx2-Tbx5 in Xenopus.</title>
        <authorList>
            <person name="Takabatake Y."/>
            <person name="Takabatake T."/>
            <person name="Takeshima K."/>
        </authorList>
    </citation>
    <scope>NUCLEOTIDE SEQUENCE [MRNA]</scope>
    <scope>DEVELOPMENTAL STAGE</scope>
</reference>
<accession>Q9IBC8</accession>
<accession>Q9W7R7</accession>
<keyword id="KW-0175">Coiled coil</keyword>
<keyword id="KW-0238">DNA-binding</keyword>
<keyword id="KW-0539">Nucleus</keyword>
<keyword id="KW-1185">Reference proteome</keyword>
<keyword id="KW-0804">Transcription</keyword>
<keyword id="KW-0805">Transcription regulation</keyword>
<dbReference type="EMBL" id="AB023815">
    <property type="protein sequence ID" value="BAA82338.1"/>
    <property type="status" value="ALT_INIT"/>
    <property type="molecule type" value="mRNA"/>
</dbReference>
<dbReference type="EMBL" id="AB032941">
    <property type="protein sequence ID" value="BAA93081.1"/>
    <property type="status" value="ALT_INIT"/>
    <property type="molecule type" value="mRNA"/>
</dbReference>
<dbReference type="RefSeq" id="NP_001081374.1">
    <property type="nucleotide sequence ID" value="NM_001087905.1"/>
</dbReference>
<dbReference type="SMR" id="Q9IBC8"/>
<dbReference type="BioGRID" id="99140">
    <property type="interactions" value="3"/>
</dbReference>
<dbReference type="GeneID" id="397801"/>
<dbReference type="KEGG" id="xla:397801"/>
<dbReference type="AGR" id="Xenbase:XB-GENE-1018122"/>
<dbReference type="CTD" id="397801"/>
<dbReference type="Xenbase" id="XB-GENE-1018122">
    <property type="gene designation" value="tbx2.L"/>
</dbReference>
<dbReference type="OMA" id="EQCKPER"/>
<dbReference type="OrthoDB" id="7442607at2759"/>
<dbReference type="Proteomes" id="UP000186698">
    <property type="component" value="Chromosome 2L"/>
</dbReference>
<dbReference type="Bgee" id="397801">
    <property type="expression patterns" value="Expressed in internal ear and 15 other cell types or tissues"/>
</dbReference>
<dbReference type="GO" id="GO:0000785">
    <property type="term" value="C:chromatin"/>
    <property type="evidence" value="ECO:0000318"/>
    <property type="project" value="GO_Central"/>
</dbReference>
<dbReference type="GO" id="GO:0005634">
    <property type="term" value="C:nucleus"/>
    <property type="evidence" value="ECO:0000318"/>
    <property type="project" value="GO_Central"/>
</dbReference>
<dbReference type="GO" id="GO:0000981">
    <property type="term" value="F:DNA-binding transcription factor activity, RNA polymerase II-specific"/>
    <property type="evidence" value="ECO:0000318"/>
    <property type="project" value="GO_Central"/>
</dbReference>
<dbReference type="GO" id="GO:0000978">
    <property type="term" value="F:RNA polymerase II cis-regulatory region sequence-specific DNA binding"/>
    <property type="evidence" value="ECO:0000318"/>
    <property type="project" value="GO_Central"/>
</dbReference>
<dbReference type="GO" id="GO:0001708">
    <property type="term" value="P:cell fate specification"/>
    <property type="evidence" value="ECO:0000318"/>
    <property type="project" value="GO_Central"/>
</dbReference>
<dbReference type="GO" id="GO:0045893">
    <property type="term" value="P:positive regulation of DNA-templated transcription"/>
    <property type="evidence" value="ECO:0007669"/>
    <property type="project" value="InterPro"/>
</dbReference>
<dbReference type="GO" id="GO:0006357">
    <property type="term" value="P:regulation of transcription by RNA polymerase II"/>
    <property type="evidence" value="ECO:0000318"/>
    <property type="project" value="GO_Central"/>
</dbReference>
<dbReference type="CDD" id="cd20188">
    <property type="entry name" value="T-box_TBX2_3-like"/>
    <property type="match status" value="1"/>
</dbReference>
<dbReference type="FunFam" id="2.60.40.820:FF:000003">
    <property type="entry name" value="T-box transcription factor TBX3"/>
    <property type="match status" value="1"/>
</dbReference>
<dbReference type="Gene3D" id="2.60.40.820">
    <property type="entry name" value="Transcription factor, T-box"/>
    <property type="match status" value="1"/>
</dbReference>
<dbReference type="InterPro" id="IPR008967">
    <property type="entry name" value="p53-like_TF_DNA-bd_sf"/>
</dbReference>
<dbReference type="InterPro" id="IPR046360">
    <property type="entry name" value="T-box_DNA-bd"/>
</dbReference>
<dbReference type="InterPro" id="IPR036960">
    <property type="entry name" value="T-box_sf"/>
</dbReference>
<dbReference type="InterPro" id="IPR022582">
    <property type="entry name" value="TBX2/3_TAD"/>
</dbReference>
<dbReference type="InterPro" id="IPR048387">
    <property type="entry name" value="TBX2_3_RD"/>
</dbReference>
<dbReference type="InterPro" id="IPR002070">
    <property type="entry name" value="TF_Brachyury"/>
</dbReference>
<dbReference type="InterPro" id="IPR001699">
    <property type="entry name" value="TF_T-box"/>
</dbReference>
<dbReference type="InterPro" id="IPR018186">
    <property type="entry name" value="TF_T-box_CS"/>
</dbReference>
<dbReference type="PANTHER" id="PTHR11267">
    <property type="entry name" value="T-BOX PROTEIN-RELATED"/>
    <property type="match status" value="1"/>
</dbReference>
<dbReference type="PANTHER" id="PTHR11267:SF82">
    <property type="entry name" value="T-BOX TRANSCRIPTION FACTOR TBX2"/>
    <property type="match status" value="1"/>
</dbReference>
<dbReference type="Pfam" id="PF00907">
    <property type="entry name" value="T-box"/>
    <property type="match status" value="1"/>
</dbReference>
<dbReference type="Pfam" id="PF20627">
    <property type="entry name" value="TBX2-3_RD"/>
    <property type="match status" value="1"/>
</dbReference>
<dbReference type="Pfam" id="PF12598">
    <property type="entry name" value="TBX2-3_TAD"/>
    <property type="match status" value="1"/>
</dbReference>
<dbReference type="PRINTS" id="PR00938">
    <property type="entry name" value="BRACHYURY"/>
</dbReference>
<dbReference type="PRINTS" id="PR00937">
    <property type="entry name" value="TBOX"/>
</dbReference>
<dbReference type="SMART" id="SM00425">
    <property type="entry name" value="TBOX"/>
    <property type="match status" value="1"/>
</dbReference>
<dbReference type="SUPFAM" id="SSF49417">
    <property type="entry name" value="p53-like transcription factors"/>
    <property type="match status" value="1"/>
</dbReference>
<dbReference type="PROSITE" id="PS01283">
    <property type="entry name" value="TBOX_1"/>
    <property type="match status" value="1"/>
</dbReference>
<dbReference type="PROSITE" id="PS01264">
    <property type="entry name" value="TBOX_2"/>
    <property type="match status" value="1"/>
</dbReference>
<dbReference type="PROSITE" id="PS50252">
    <property type="entry name" value="TBOX_3"/>
    <property type="match status" value="1"/>
</dbReference>
<feature type="chain" id="PRO_0000262464" description="T-box transcription factor TBX2-A">
    <location>
        <begin position="1"/>
        <end position="688"/>
    </location>
</feature>
<feature type="DNA-binding region" description="T-box" evidence="4">
    <location>
        <begin position="104"/>
        <end position="277"/>
    </location>
</feature>
<feature type="region of interest" description="Disordered" evidence="5">
    <location>
        <begin position="301"/>
        <end position="436"/>
    </location>
</feature>
<feature type="region of interest" description="Disordered" evidence="5">
    <location>
        <begin position="606"/>
        <end position="688"/>
    </location>
</feature>
<feature type="coiled-coil region" evidence="3">
    <location>
        <begin position="655"/>
        <end position="679"/>
    </location>
</feature>
<feature type="compositionally biased region" description="Basic and acidic residues" evidence="5">
    <location>
        <begin position="340"/>
        <end position="361"/>
    </location>
</feature>
<feature type="compositionally biased region" description="Basic and acidic residues" evidence="5">
    <location>
        <begin position="378"/>
        <end position="403"/>
    </location>
</feature>
<feature type="compositionally biased region" description="Basic and acidic residues" evidence="5">
    <location>
        <begin position="412"/>
        <end position="430"/>
    </location>
</feature>
<feature type="compositionally biased region" description="Low complexity" evidence="5">
    <location>
        <begin position="621"/>
        <end position="636"/>
    </location>
</feature>
<feature type="compositionally biased region" description="Basic and acidic residues" evidence="5">
    <location>
        <begin position="676"/>
        <end position="688"/>
    </location>
</feature>
<feature type="sequence conflict" description="In Ref. 1; BAA82338." evidence="8" ref="1">
    <original>QP</original>
    <variation>HA</variation>
    <location>
        <begin position="221"/>
        <end position="222"/>
    </location>
</feature>
<evidence type="ECO:0000250" key="1">
    <source>
        <dbReference type="UniProtKB" id="Q13207"/>
    </source>
</evidence>
<evidence type="ECO:0000250" key="2">
    <source>
        <dbReference type="UniProtKB" id="Q60707"/>
    </source>
</evidence>
<evidence type="ECO:0000255" key="3"/>
<evidence type="ECO:0000255" key="4">
    <source>
        <dbReference type="PROSITE-ProRule" id="PRU00201"/>
    </source>
</evidence>
<evidence type="ECO:0000256" key="5">
    <source>
        <dbReference type="SAM" id="MobiDB-lite"/>
    </source>
</evidence>
<evidence type="ECO:0000269" key="6">
    <source>
    </source>
</evidence>
<evidence type="ECO:0000269" key="7">
    <source>
    </source>
</evidence>
<evidence type="ECO:0000305" key="8"/>